<sequence>MSTDKTNQSWGGRFSEPVDAFVARFTASVTFDQRLYRHDIMGSIAHATMLAKVGVLTDAERDSIIDGLKTIQGEIEAGSFDWRVDLEDVHMNIEARLTDRIGITGKKLHTGRSRNDQVATDIRLWLRDEIDLILGEITRLQKGLLELAEREAESIMPGFTHLQTAQPVTFGHHMLAWFEMLSRDYERLVDCRKRTNRMPLGSAALAGTTYPIDRELTCQLLGFEAVGGNSLDSVSDRDFAIEFCAAASVAMMHLSRFSEELVLWTSAQFQFIDLPDRFCTGSSIMPQKKNPDVPELVRGKSGRVFGALMGLLTLMKGQPLAYNKDNQEDKEPLFDAADTLRDSLRAFADMIPAIKPKHAIMREAALRGFSTATDLADYLVRRGLPFRDCHEIVGHAVKYGVETGKDLAEMSLEELRKFSDQIEQDVFAVLTLEGSVNARNHIGGTAPAQVRAAVARGQALLASR</sequence>
<proteinExistence type="inferred from homology"/>
<name>ARLY_PSEF5</name>
<protein>
    <recommendedName>
        <fullName evidence="1">Argininosuccinate lyase</fullName>
        <shortName evidence="1">ASAL</shortName>
        <ecNumber evidence="1">4.3.2.1</ecNumber>
    </recommendedName>
    <alternativeName>
        <fullName evidence="1">Arginosuccinase</fullName>
    </alternativeName>
</protein>
<reference key="1">
    <citation type="journal article" date="2005" name="Nat. Biotechnol.">
        <title>Complete genome sequence of the plant commensal Pseudomonas fluorescens Pf-5.</title>
        <authorList>
            <person name="Paulsen I.T."/>
            <person name="Press C.M."/>
            <person name="Ravel J."/>
            <person name="Kobayashi D.Y."/>
            <person name="Myers G.S.A."/>
            <person name="Mavrodi D.V."/>
            <person name="DeBoy R.T."/>
            <person name="Seshadri R."/>
            <person name="Ren Q."/>
            <person name="Madupu R."/>
            <person name="Dodson R.J."/>
            <person name="Durkin A.S."/>
            <person name="Brinkac L.M."/>
            <person name="Daugherty S.C."/>
            <person name="Sullivan S.A."/>
            <person name="Rosovitz M.J."/>
            <person name="Gwinn M.L."/>
            <person name="Zhou L."/>
            <person name="Schneider D.J."/>
            <person name="Cartinhour S.W."/>
            <person name="Nelson W.C."/>
            <person name="Weidman J."/>
            <person name="Watkins K."/>
            <person name="Tran K."/>
            <person name="Khouri H."/>
            <person name="Pierson E.A."/>
            <person name="Pierson L.S. III"/>
            <person name="Thomashow L.S."/>
            <person name="Loper J.E."/>
        </authorList>
    </citation>
    <scope>NUCLEOTIDE SEQUENCE [LARGE SCALE GENOMIC DNA]</scope>
    <source>
        <strain>ATCC BAA-477 / NRRL B-23932 / Pf-5</strain>
    </source>
</reference>
<gene>
    <name evidence="1" type="primary">argH</name>
    <name type="ordered locus">PFL_6004</name>
</gene>
<keyword id="KW-0028">Amino-acid biosynthesis</keyword>
<keyword id="KW-0055">Arginine biosynthesis</keyword>
<keyword id="KW-0963">Cytoplasm</keyword>
<keyword id="KW-0456">Lyase</keyword>
<dbReference type="EC" id="4.3.2.1" evidence="1"/>
<dbReference type="EMBL" id="CP000076">
    <property type="protein sequence ID" value="AAY95193.1"/>
    <property type="molecule type" value="Genomic_DNA"/>
</dbReference>
<dbReference type="RefSeq" id="WP_011064177.1">
    <property type="nucleotide sequence ID" value="NC_004129.6"/>
</dbReference>
<dbReference type="SMR" id="Q4K3X1"/>
<dbReference type="STRING" id="220664.PFL_6004"/>
<dbReference type="KEGG" id="pfl:PFL_6004"/>
<dbReference type="PATRIC" id="fig|220664.5.peg.6127"/>
<dbReference type="eggNOG" id="COG0165">
    <property type="taxonomic scope" value="Bacteria"/>
</dbReference>
<dbReference type="HOGENOM" id="CLU_027272_2_3_6"/>
<dbReference type="UniPathway" id="UPA00068">
    <property type="reaction ID" value="UER00114"/>
</dbReference>
<dbReference type="Proteomes" id="UP000008540">
    <property type="component" value="Chromosome"/>
</dbReference>
<dbReference type="GO" id="GO:0005829">
    <property type="term" value="C:cytosol"/>
    <property type="evidence" value="ECO:0007669"/>
    <property type="project" value="TreeGrafter"/>
</dbReference>
<dbReference type="GO" id="GO:0004056">
    <property type="term" value="F:argininosuccinate lyase activity"/>
    <property type="evidence" value="ECO:0007669"/>
    <property type="project" value="UniProtKB-UniRule"/>
</dbReference>
<dbReference type="GO" id="GO:0042450">
    <property type="term" value="P:arginine biosynthetic process via ornithine"/>
    <property type="evidence" value="ECO:0007669"/>
    <property type="project" value="InterPro"/>
</dbReference>
<dbReference type="GO" id="GO:0006526">
    <property type="term" value="P:L-arginine biosynthetic process"/>
    <property type="evidence" value="ECO:0007669"/>
    <property type="project" value="UniProtKB-UniRule"/>
</dbReference>
<dbReference type="CDD" id="cd01359">
    <property type="entry name" value="Argininosuccinate_lyase"/>
    <property type="match status" value="1"/>
</dbReference>
<dbReference type="FunFam" id="1.10.275.10:FF:000002">
    <property type="entry name" value="Argininosuccinate lyase"/>
    <property type="match status" value="1"/>
</dbReference>
<dbReference type="FunFam" id="1.10.40.30:FF:000001">
    <property type="entry name" value="Argininosuccinate lyase"/>
    <property type="match status" value="1"/>
</dbReference>
<dbReference type="FunFam" id="1.20.200.10:FF:000015">
    <property type="entry name" value="argininosuccinate lyase isoform X2"/>
    <property type="match status" value="1"/>
</dbReference>
<dbReference type="Gene3D" id="1.10.40.30">
    <property type="entry name" value="Fumarase/aspartase (C-terminal domain)"/>
    <property type="match status" value="1"/>
</dbReference>
<dbReference type="Gene3D" id="1.20.200.10">
    <property type="entry name" value="Fumarase/aspartase (Central domain)"/>
    <property type="match status" value="1"/>
</dbReference>
<dbReference type="Gene3D" id="1.10.275.10">
    <property type="entry name" value="Fumarase/aspartase (N-terminal domain)"/>
    <property type="match status" value="1"/>
</dbReference>
<dbReference type="HAMAP" id="MF_00006">
    <property type="entry name" value="Arg_succ_lyase"/>
    <property type="match status" value="1"/>
</dbReference>
<dbReference type="InterPro" id="IPR029419">
    <property type="entry name" value="Arg_succ_lyase_C"/>
</dbReference>
<dbReference type="InterPro" id="IPR009049">
    <property type="entry name" value="Argininosuccinate_lyase"/>
</dbReference>
<dbReference type="InterPro" id="IPR024083">
    <property type="entry name" value="Fumarase/histidase_N"/>
</dbReference>
<dbReference type="InterPro" id="IPR020557">
    <property type="entry name" value="Fumarate_lyase_CS"/>
</dbReference>
<dbReference type="InterPro" id="IPR000362">
    <property type="entry name" value="Fumarate_lyase_fam"/>
</dbReference>
<dbReference type="InterPro" id="IPR022761">
    <property type="entry name" value="Fumarate_lyase_N"/>
</dbReference>
<dbReference type="InterPro" id="IPR008948">
    <property type="entry name" value="L-Aspartase-like"/>
</dbReference>
<dbReference type="NCBIfam" id="TIGR00838">
    <property type="entry name" value="argH"/>
    <property type="match status" value="1"/>
</dbReference>
<dbReference type="PANTHER" id="PTHR43814">
    <property type="entry name" value="ARGININOSUCCINATE LYASE"/>
    <property type="match status" value="1"/>
</dbReference>
<dbReference type="PANTHER" id="PTHR43814:SF1">
    <property type="entry name" value="ARGININOSUCCINATE LYASE"/>
    <property type="match status" value="1"/>
</dbReference>
<dbReference type="Pfam" id="PF14698">
    <property type="entry name" value="ASL_C2"/>
    <property type="match status" value="1"/>
</dbReference>
<dbReference type="Pfam" id="PF00206">
    <property type="entry name" value="Lyase_1"/>
    <property type="match status" value="1"/>
</dbReference>
<dbReference type="PRINTS" id="PR00145">
    <property type="entry name" value="ARGSUCLYASE"/>
</dbReference>
<dbReference type="PRINTS" id="PR00149">
    <property type="entry name" value="FUMRATELYASE"/>
</dbReference>
<dbReference type="SUPFAM" id="SSF48557">
    <property type="entry name" value="L-aspartase-like"/>
    <property type="match status" value="1"/>
</dbReference>
<dbReference type="PROSITE" id="PS00163">
    <property type="entry name" value="FUMARATE_LYASES"/>
    <property type="match status" value="1"/>
</dbReference>
<accession>Q4K3X1</accession>
<evidence type="ECO:0000255" key="1">
    <source>
        <dbReference type="HAMAP-Rule" id="MF_00006"/>
    </source>
</evidence>
<organism>
    <name type="scientific">Pseudomonas fluorescens (strain ATCC BAA-477 / NRRL B-23932 / Pf-5)</name>
    <dbReference type="NCBI Taxonomy" id="220664"/>
    <lineage>
        <taxon>Bacteria</taxon>
        <taxon>Pseudomonadati</taxon>
        <taxon>Pseudomonadota</taxon>
        <taxon>Gammaproteobacteria</taxon>
        <taxon>Pseudomonadales</taxon>
        <taxon>Pseudomonadaceae</taxon>
        <taxon>Pseudomonas</taxon>
    </lineage>
</organism>
<comment type="catalytic activity">
    <reaction evidence="1">
        <text>2-(N(omega)-L-arginino)succinate = fumarate + L-arginine</text>
        <dbReference type="Rhea" id="RHEA:24020"/>
        <dbReference type="ChEBI" id="CHEBI:29806"/>
        <dbReference type="ChEBI" id="CHEBI:32682"/>
        <dbReference type="ChEBI" id="CHEBI:57472"/>
        <dbReference type="EC" id="4.3.2.1"/>
    </reaction>
</comment>
<comment type="pathway">
    <text evidence="1">Amino-acid biosynthesis; L-arginine biosynthesis; L-arginine from L-ornithine and carbamoyl phosphate: step 3/3.</text>
</comment>
<comment type="subcellular location">
    <subcellularLocation>
        <location evidence="1">Cytoplasm</location>
    </subcellularLocation>
</comment>
<comment type="similarity">
    <text evidence="1">Belongs to the lyase 1 family. Argininosuccinate lyase subfamily.</text>
</comment>
<feature type="chain" id="PRO_0000240751" description="Argininosuccinate lyase">
    <location>
        <begin position="1"/>
        <end position="464"/>
    </location>
</feature>